<dbReference type="EC" id="1.7.1.13" evidence="1"/>
<dbReference type="EMBL" id="CP001131">
    <property type="protein sequence ID" value="ACG75422.1"/>
    <property type="molecule type" value="Genomic_DNA"/>
</dbReference>
<dbReference type="RefSeq" id="WP_012528175.1">
    <property type="nucleotide sequence ID" value="NC_011145.1"/>
</dbReference>
<dbReference type="SMR" id="B4UI08"/>
<dbReference type="KEGG" id="ank:AnaeK_4219"/>
<dbReference type="HOGENOM" id="CLU_102489_1_0_7"/>
<dbReference type="UniPathway" id="UPA00392"/>
<dbReference type="Proteomes" id="UP000001871">
    <property type="component" value="Chromosome"/>
</dbReference>
<dbReference type="GO" id="GO:0005737">
    <property type="term" value="C:cytoplasm"/>
    <property type="evidence" value="ECO:0007669"/>
    <property type="project" value="UniProtKB-SubCell"/>
</dbReference>
<dbReference type="GO" id="GO:0033739">
    <property type="term" value="F:preQ1 synthase activity"/>
    <property type="evidence" value="ECO:0007669"/>
    <property type="project" value="UniProtKB-UniRule"/>
</dbReference>
<dbReference type="GO" id="GO:0008616">
    <property type="term" value="P:queuosine biosynthetic process"/>
    <property type="evidence" value="ECO:0007669"/>
    <property type="project" value="UniProtKB-UniRule"/>
</dbReference>
<dbReference type="GO" id="GO:0006400">
    <property type="term" value="P:tRNA modification"/>
    <property type="evidence" value="ECO:0007669"/>
    <property type="project" value="UniProtKB-UniRule"/>
</dbReference>
<dbReference type="Gene3D" id="3.30.1130.10">
    <property type="match status" value="1"/>
</dbReference>
<dbReference type="HAMAP" id="MF_00818">
    <property type="entry name" value="QueF_type1"/>
    <property type="match status" value="1"/>
</dbReference>
<dbReference type="InterPro" id="IPR043133">
    <property type="entry name" value="GTP-CH-I_C/QueF"/>
</dbReference>
<dbReference type="InterPro" id="IPR050084">
    <property type="entry name" value="NADPH_dep_7-cyano-7-deazaG_red"/>
</dbReference>
<dbReference type="InterPro" id="IPR029500">
    <property type="entry name" value="QueF"/>
</dbReference>
<dbReference type="InterPro" id="IPR016856">
    <property type="entry name" value="QueF_type1"/>
</dbReference>
<dbReference type="NCBIfam" id="TIGR03139">
    <property type="entry name" value="QueF-II"/>
    <property type="match status" value="1"/>
</dbReference>
<dbReference type="PANTHER" id="PTHR34354">
    <property type="entry name" value="NADPH-DEPENDENT 7-CYANO-7-DEAZAGUANINE REDUCTASE"/>
    <property type="match status" value="1"/>
</dbReference>
<dbReference type="PANTHER" id="PTHR34354:SF1">
    <property type="entry name" value="NADPH-DEPENDENT 7-CYANO-7-DEAZAGUANINE REDUCTASE"/>
    <property type="match status" value="1"/>
</dbReference>
<dbReference type="Pfam" id="PF14489">
    <property type="entry name" value="QueF"/>
    <property type="match status" value="1"/>
</dbReference>
<dbReference type="PIRSF" id="PIRSF027377">
    <property type="entry name" value="Nitrile_oxidored_QueF"/>
    <property type="match status" value="1"/>
</dbReference>
<dbReference type="SUPFAM" id="SSF55620">
    <property type="entry name" value="Tetrahydrobiopterin biosynthesis enzymes-like"/>
    <property type="match status" value="1"/>
</dbReference>
<protein>
    <recommendedName>
        <fullName evidence="1">NADPH-dependent 7-cyano-7-deazaguanine reductase</fullName>
        <ecNumber evidence="1">1.7.1.13</ecNumber>
    </recommendedName>
    <alternativeName>
        <fullName evidence="1">7-cyano-7-carbaguanine reductase</fullName>
    </alternativeName>
    <alternativeName>
        <fullName evidence="1">NADPH-dependent nitrile oxidoreductase</fullName>
    </alternativeName>
    <alternativeName>
        <fullName evidence="1">PreQ(0) reductase</fullName>
    </alternativeName>
</protein>
<accession>B4UI08</accession>
<comment type="function">
    <text evidence="1">Catalyzes the NADPH-dependent reduction of 7-cyano-7-deazaguanine (preQ0) to 7-aminomethyl-7-deazaguanine (preQ1).</text>
</comment>
<comment type="catalytic activity">
    <reaction evidence="1">
        <text>7-aminomethyl-7-carbaguanine + 2 NADP(+) = 7-cyano-7-deazaguanine + 2 NADPH + 3 H(+)</text>
        <dbReference type="Rhea" id="RHEA:13409"/>
        <dbReference type="ChEBI" id="CHEBI:15378"/>
        <dbReference type="ChEBI" id="CHEBI:45075"/>
        <dbReference type="ChEBI" id="CHEBI:57783"/>
        <dbReference type="ChEBI" id="CHEBI:58349"/>
        <dbReference type="ChEBI" id="CHEBI:58703"/>
        <dbReference type="EC" id="1.7.1.13"/>
    </reaction>
</comment>
<comment type="pathway">
    <text evidence="1">tRNA modification; tRNA-queuosine biosynthesis.</text>
</comment>
<comment type="subcellular location">
    <subcellularLocation>
        <location evidence="1">Cytoplasm</location>
    </subcellularLocation>
</comment>
<comment type="similarity">
    <text evidence="1">Belongs to the GTP cyclohydrolase I family. QueF type 1 subfamily.</text>
</comment>
<keyword id="KW-0963">Cytoplasm</keyword>
<keyword id="KW-0521">NADP</keyword>
<keyword id="KW-0560">Oxidoreductase</keyword>
<keyword id="KW-0671">Queuosine biosynthesis</keyword>
<proteinExistence type="inferred from homology"/>
<evidence type="ECO:0000255" key="1">
    <source>
        <dbReference type="HAMAP-Rule" id="MF_00818"/>
    </source>
</evidence>
<sequence>MPTQPSRDLQTFPNPKPGRPFEIAMECPEFTCVCPMTGQPDFATIRLRYVPAERCVELKSLKLYLWSFRNEGTFHEAVTNRICDDLVAALAPRWIEVVGDFAVRGGIHTVVTARHGERPAGV</sequence>
<reference key="1">
    <citation type="submission" date="2008-08" db="EMBL/GenBank/DDBJ databases">
        <title>Complete sequence of Anaeromyxobacter sp. K.</title>
        <authorList>
            <consortium name="US DOE Joint Genome Institute"/>
            <person name="Lucas S."/>
            <person name="Copeland A."/>
            <person name="Lapidus A."/>
            <person name="Glavina del Rio T."/>
            <person name="Dalin E."/>
            <person name="Tice H."/>
            <person name="Bruce D."/>
            <person name="Goodwin L."/>
            <person name="Pitluck S."/>
            <person name="Saunders E."/>
            <person name="Brettin T."/>
            <person name="Detter J.C."/>
            <person name="Han C."/>
            <person name="Larimer F."/>
            <person name="Land M."/>
            <person name="Hauser L."/>
            <person name="Kyrpides N."/>
            <person name="Ovchinnikiva G."/>
            <person name="Beliaev A."/>
        </authorList>
    </citation>
    <scope>NUCLEOTIDE SEQUENCE [LARGE SCALE GENOMIC DNA]</scope>
    <source>
        <strain>K</strain>
    </source>
</reference>
<feature type="chain" id="PRO_1000134290" description="NADPH-dependent 7-cyano-7-deazaguanine reductase">
    <location>
        <begin position="1"/>
        <end position="122"/>
    </location>
</feature>
<feature type="active site" description="Thioimide intermediate" evidence="1">
    <location>
        <position position="34"/>
    </location>
</feature>
<feature type="active site" description="Proton donor" evidence="1">
    <location>
        <position position="41"/>
    </location>
</feature>
<feature type="binding site" evidence="1">
    <location>
        <begin position="56"/>
        <end position="58"/>
    </location>
    <ligand>
        <name>substrate</name>
    </ligand>
</feature>
<feature type="binding site" evidence="1">
    <location>
        <begin position="75"/>
        <end position="76"/>
    </location>
    <ligand>
        <name>substrate</name>
    </ligand>
</feature>
<gene>
    <name evidence="1" type="primary">queF</name>
    <name type="ordered locus">AnaeK_4219</name>
</gene>
<name>QUEF_ANASK</name>
<organism>
    <name type="scientific">Anaeromyxobacter sp. (strain K)</name>
    <dbReference type="NCBI Taxonomy" id="447217"/>
    <lineage>
        <taxon>Bacteria</taxon>
        <taxon>Pseudomonadati</taxon>
        <taxon>Myxococcota</taxon>
        <taxon>Myxococcia</taxon>
        <taxon>Myxococcales</taxon>
        <taxon>Cystobacterineae</taxon>
        <taxon>Anaeromyxobacteraceae</taxon>
        <taxon>Anaeromyxobacter</taxon>
    </lineage>
</organism>